<gene>
    <name evidence="1" type="primary">mtnA</name>
    <name type="ordered locus">YPTB0877</name>
</gene>
<feature type="chain" id="PRO_0000357280" description="Methylthioribose-1-phosphate isomerase">
    <location>
        <begin position="1"/>
        <end position="346"/>
    </location>
</feature>
<feature type="active site" description="Proton donor" evidence="1">
    <location>
        <position position="233"/>
    </location>
</feature>
<feature type="binding site" evidence="1">
    <location>
        <begin position="54"/>
        <end position="56"/>
    </location>
    <ligand>
        <name>substrate</name>
    </ligand>
</feature>
<feature type="binding site" evidence="1">
    <location>
        <position position="91"/>
    </location>
    <ligand>
        <name>substrate</name>
    </ligand>
</feature>
<feature type="binding site" evidence="1">
    <location>
        <position position="192"/>
    </location>
    <ligand>
        <name>substrate</name>
    </ligand>
</feature>
<feature type="binding site" evidence="1">
    <location>
        <begin position="243"/>
        <end position="244"/>
    </location>
    <ligand>
        <name>substrate</name>
    </ligand>
</feature>
<feature type="site" description="Transition state stabilizer" evidence="1">
    <location>
        <position position="153"/>
    </location>
</feature>
<sequence length="346" mass="37153">MQTLNTLDLQTTSLKIVNGQLWILDQQALPQRQEWLLADTVASLIEHIQALRVRGAPLIGLSASLLLALLAERGLSQALLEQALIALRESRPTAVNLMNNLARMQQALLQPNWVTAMAAEALRLVDEDRELCERIAQHGAALVKPGSNLLTHCNTGGLATAGIGTAIGVLLRAHQQGNLRQVWVDETRPLLQGGRLTAWELGELGIPYQLICDSMAASLMAHGQVDAIWVGADRIAANGDVANKIGTYSLAVLAHYHRIPFYVAAPHTTHDPDCPDGAAIPIEQRAASEVTGVSGGFGHCQWAPKDTAVYNPAFDVTPAALISGWVLDSGVITPEQVAAGFFQPHR</sequence>
<accession>Q66E16</accession>
<reference key="1">
    <citation type="journal article" date="2004" name="Proc. Natl. Acad. Sci. U.S.A.">
        <title>Insights into the evolution of Yersinia pestis through whole-genome comparison with Yersinia pseudotuberculosis.</title>
        <authorList>
            <person name="Chain P.S.G."/>
            <person name="Carniel E."/>
            <person name="Larimer F.W."/>
            <person name="Lamerdin J."/>
            <person name="Stoutland P.O."/>
            <person name="Regala W.M."/>
            <person name="Georgescu A.M."/>
            <person name="Vergez L.M."/>
            <person name="Land M.L."/>
            <person name="Motin V.L."/>
            <person name="Brubaker R.R."/>
            <person name="Fowler J."/>
            <person name="Hinnebusch J."/>
            <person name="Marceau M."/>
            <person name="Medigue C."/>
            <person name="Simonet M."/>
            <person name="Chenal-Francisque V."/>
            <person name="Souza B."/>
            <person name="Dacheux D."/>
            <person name="Elliott J.M."/>
            <person name="Derbise A."/>
            <person name="Hauser L.J."/>
            <person name="Garcia E."/>
        </authorList>
    </citation>
    <scope>NUCLEOTIDE SEQUENCE [LARGE SCALE GENOMIC DNA]</scope>
    <source>
        <strain>IP32953</strain>
    </source>
</reference>
<comment type="function">
    <text evidence="1">Catalyzes the interconversion of methylthioribose-1-phosphate (MTR-1-P) into methylthioribulose-1-phosphate (MTRu-1-P).</text>
</comment>
<comment type="catalytic activity">
    <reaction evidence="1">
        <text>5-(methylsulfanyl)-alpha-D-ribose 1-phosphate = 5-(methylsulfanyl)-D-ribulose 1-phosphate</text>
        <dbReference type="Rhea" id="RHEA:19989"/>
        <dbReference type="ChEBI" id="CHEBI:58533"/>
        <dbReference type="ChEBI" id="CHEBI:58548"/>
        <dbReference type="EC" id="5.3.1.23"/>
    </reaction>
</comment>
<comment type="pathway">
    <text evidence="1">Amino-acid biosynthesis; L-methionine biosynthesis via salvage pathway; L-methionine from S-methyl-5-thio-alpha-D-ribose 1-phosphate: step 1/6.</text>
</comment>
<comment type="similarity">
    <text evidence="2">Belongs to the eIF-2B alpha/beta/delta subunits family. MtnA subfamily.</text>
</comment>
<keyword id="KW-0028">Amino-acid biosynthesis</keyword>
<keyword id="KW-0413">Isomerase</keyword>
<keyword id="KW-0486">Methionine biosynthesis</keyword>
<proteinExistence type="inferred from homology"/>
<dbReference type="EC" id="5.3.1.23" evidence="1"/>
<dbReference type="EMBL" id="BX936398">
    <property type="protein sequence ID" value="CAH20117.1"/>
    <property type="molecule type" value="Genomic_DNA"/>
</dbReference>
<dbReference type="RefSeq" id="WP_011191834.1">
    <property type="nucleotide sequence ID" value="NC_006155.1"/>
</dbReference>
<dbReference type="SMR" id="Q66E16"/>
<dbReference type="GeneID" id="49787069"/>
<dbReference type="KEGG" id="ypo:BZ17_1669"/>
<dbReference type="KEGG" id="yps:YPTB0877"/>
<dbReference type="PATRIC" id="fig|273123.14.peg.1777"/>
<dbReference type="UniPathway" id="UPA00904">
    <property type="reaction ID" value="UER00874"/>
</dbReference>
<dbReference type="Proteomes" id="UP000001011">
    <property type="component" value="Chromosome"/>
</dbReference>
<dbReference type="GO" id="GO:0046523">
    <property type="term" value="F:S-methyl-5-thioribose-1-phosphate isomerase activity"/>
    <property type="evidence" value="ECO:0007669"/>
    <property type="project" value="UniProtKB-UniRule"/>
</dbReference>
<dbReference type="GO" id="GO:0019509">
    <property type="term" value="P:L-methionine salvage from methylthioadenosine"/>
    <property type="evidence" value="ECO:0007669"/>
    <property type="project" value="UniProtKB-UniRule"/>
</dbReference>
<dbReference type="FunFam" id="3.40.50.10470:FF:000006">
    <property type="entry name" value="Methylthioribose-1-phosphate isomerase"/>
    <property type="match status" value="1"/>
</dbReference>
<dbReference type="Gene3D" id="1.20.120.420">
    <property type="entry name" value="translation initiation factor eif-2b, domain 1"/>
    <property type="match status" value="1"/>
</dbReference>
<dbReference type="Gene3D" id="3.40.50.10470">
    <property type="entry name" value="Translation initiation factor eif-2b, domain 2"/>
    <property type="match status" value="1"/>
</dbReference>
<dbReference type="HAMAP" id="MF_01678">
    <property type="entry name" value="Salvage_MtnA"/>
    <property type="match status" value="1"/>
</dbReference>
<dbReference type="InterPro" id="IPR000649">
    <property type="entry name" value="IF-2B-related"/>
</dbReference>
<dbReference type="InterPro" id="IPR005251">
    <property type="entry name" value="IF-M1Pi"/>
</dbReference>
<dbReference type="InterPro" id="IPR042529">
    <property type="entry name" value="IF_2B-like_C"/>
</dbReference>
<dbReference type="InterPro" id="IPR011559">
    <property type="entry name" value="Initiation_fac_2B_a/b/d"/>
</dbReference>
<dbReference type="InterPro" id="IPR027363">
    <property type="entry name" value="M1Pi_N"/>
</dbReference>
<dbReference type="InterPro" id="IPR037171">
    <property type="entry name" value="NagB/RpiA_transferase-like"/>
</dbReference>
<dbReference type="NCBIfam" id="TIGR00524">
    <property type="entry name" value="eIF-2B_rel"/>
    <property type="match status" value="1"/>
</dbReference>
<dbReference type="NCBIfam" id="NF004326">
    <property type="entry name" value="PRK05720.1"/>
    <property type="match status" value="1"/>
</dbReference>
<dbReference type="NCBIfam" id="TIGR00512">
    <property type="entry name" value="salvage_mtnA"/>
    <property type="match status" value="1"/>
</dbReference>
<dbReference type="PANTHER" id="PTHR43475">
    <property type="entry name" value="METHYLTHIORIBOSE-1-PHOSPHATE ISOMERASE"/>
    <property type="match status" value="1"/>
</dbReference>
<dbReference type="PANTHER" id="PTHR43475:SF1">
    <property type="entry name" value="METHYLTHIORIBOSE-1-PHOSPHATE ISOMERASE"/>
    <property type="match status" value="1"/>
</dbReference>
<dbReference type="Pfam" id="PF01008">
    <property type="entry name" value="IF-2B"/>
    <property type="match status" value="1"/>
</dbReference>
<dbReference type="SUPFAM" id="SSF100950">
    <property type="entry name" value="NagB/RpiA/CoA transferase-like"/>
    <property type="match status" value="1"/>
</dbReference>
<evidence type="ECO:0000255" key="1">
    <source>
        <dbReference type="HAMAP-Rule" id="MF_01678"/>
    </source>
</evidence>
<evidence type="ECO:0000305" key="2"/>
<protein>
    <recommendedName>
        <fullName evidence="1">Methylthioribose-1-phosphate isomerase</fullName>
        <shortName evidence="1">M1Pi</shortName>
        <shortName evidence="1">MTR-1-P isomerase</shortName>
        <ecNumber evidence="1">5.3.1.23</ecNumber>
    </recommendedName>
    <alternativeName>
        <fullName evidence="1">S-methyl-5-thioribose-1-phosphate isomerase</fullName>
    </alternativeName>
</protein>
<organism>
    <name type="scientific">Yersinia pseudotuberculosis serotype I (strain IP32953)</name>
    <dbReference type="NCBI Taxonomy" id="273123"/>
    <lineage>
        <taxon>Bacteria</taxon>
        <taxon>Pseudomonadati</taxon>
        <taxon>Pseudomonadota</taxon>
        <taxon>Gammaproteobacteria</taxon>
        <taxon>Enterobacterales</taxon>
        <taxon>Yersiniaceae</taxon>
        <taxon>Yersinia</taxon>
    </lineage>
</organism>
<name>MTNA_YERPS</name>